<accession>Q08DF4</accession>
<dbReference type="EC" id="3.6.5.5" evidence="9"/>
<dbReference type="EMBL" id="BC123778">
    <property type="protein sequence ID" value="AAI23779.1"/>
    <property type="molecule type" value="mRNA"/>
</dbReference>
<dbReference type="RefSeq" id="NP_001070288.1">
    <property type="nucleotide sequence ID" value="NM_001076820.1"/>
</dbReference>
<dbReference type="BMRB" id="Q08DF4"/>
<dbReference type="SMR" id="Q08DF4"/>
<dbReference type="FunCoup" id="Q08DF4">
    <property type="interactions" value="1750"/>
</dbReference>
<dbReference type="STRING" id="9913.ENSBTAP00000032672"/>
<dbReference type="PaxDb" id="9913-ENSBTAP00000032672"/>
<dbReference type="GeneID" id="508794"/>
<dbReference type="KEGG" id="bta:508794"/>
<dbReference type="CTD" id="1759"/>
<dbReference type="VEuPathDB" id="HostDB:ENSBTAG00000011307"/>
<dbReference type="eggNOG" id="KOG0446">
    <property type="taxonomic scope" value="Eukaryota"/>
</dbReference>
<dbReference type="HOGENOM" id="CLU_008964_1_0_1"/>
<dbReference type="InParanoid" id="Q08DF4"/>
<dbReference type="OrthoDB" id="5061070at2759"/>
<dbReference type="TreeFam" id="TF300362"/>
<dbReference type="Reactome" id="R-BTA-166016">
    <property type="pathway name" value="Toll Like Receptor 4 (TLR4) Cascade"/>
</dbReference>
<dbReference type="Reactome" id="R-BTA-190873">
    <property type="pathway name" value="Gap junction degradation"/>
</dbReference>
<dbReference type="Reactome" id="R-BTA-196025">
    <property type="pathway name" value="Formation of annular gap junctions"/>
</dbReference>
<dbReference type="Reactome" id="R-BTA-2132295">
    <property type="pathway name" value="MHC class II antigen presentation"/>
</dbReference>
<dbReference type="Reactome" id="R-BTA-437239">
    <property type="pathway name" value="Recycling pathway of L1"/>
</dbReference>
<dbReference type="Reactome" id="R-BTA-8856828">
    <property type="pathway name" value="Clathrin-mediated endocytosis"/>
</dbReference>
<dbReference type="Proteomes" id="UP000009136">
    <property type="component" value="Chromosome 11"/>
</dbReference>
<dbReference type="Bgee" id="ENSBTAG00000011307">
    <property type="expression patterns" value="Expressed in prefrontal cortex and 107 other cell types or tissues"/>
</dbReference>
<dbReference type="GO" id="GO:0042995">
    <property type="term" value="C:cell projection"/>
    <property type="evidence" value="ECO:0007669"/>
    <property type="project" value="UniProtKB-KW"/>
</dbReference>
<dbReference type="GO" id="GO:0042584">
    <property type="term" value="C:chromaffin granule membrane"/>
    <property type="evidence" value="ECO:0000314"/>
    <property type="project" value="AgBase"/>
</dbReference>
<dbReference type="GO" id="GO:0005905">
    <property type="term" value="C:clathrin-coated pit"/>
    <property type="evidence" value="ECO:0007669"/>
    <property type="project" value="UniProtKB-SubCell"/>
</dbReference>
<dbReference type="GO" id="GO:0005737">
    <property type="term" value="C:cytoplasm"/>
    <property type="evidence" value="ECO:0000318"/>
    <property type="project" value="GO_Central"/>
</dbReference>
<dbReference type="GO" id="GO:0005874">
    <property type="term" value="C:microtubule"/>
    <property type="evidence" value="ECO:0000318"/>
    <property type="project" value="GO_Central"/>
</dbReference>
<dbReference type="GO" id="GO:0005886">
    <property type="term" value="C:plasma membrane"/>
    <property type="evidence" value="ECO:0000318"/>
    <property type="project" value="GO_Central"/>
</dbReference>
<dbReference type="GO" id="GO:0098793">
    <property type="term" value="C:presynapse"/>
    <property type="evidence" value="ECO:0007669"/>
    <property type="project" value="UniProtKB-SubCell"/>
</dbReference>
<dbReference type="GO" id="GO:0045202">
    <property type="term" value="C:synapse"/>
    <property type="evidence" value="ECO:0000318"/>
    <property type="project" value="GO_Central"/>
</dbReference>
<dbReference type="GO" id="GO:0005525">
    <property type="term" value="F:GTP binding"/>
    <property type="evidence" value="ECO:0007669"/>
    <property type="project" value="UniProtKB-KW"/>
</dbReference>
<dbReference type="GO" id="GO:0003924">
    <property type="term" value="F:GTPase activity"/>
    <property type="evidence" value="ECO:0000318"/>
    <property type="project" value="GO_Central"/>
</dbReference>
<dbReference type="GO" id="GO:0008017">
    <property type="term" value="F:microtubule binding"/>
    <property type="evidence" value="ECO:0000318"/>
    <property type="project" value="GO_Central"/>
</dbReference>
<dbReference type="GO" id="GO:0045920">
    <property type="term" value="P:negative regulation of exocytosis"/>
    <property type="evidence" value="ECO:0000314"/>
    <property type="project" value="AgBase"/>
</dbReference>
<dbReference type="GO" id="GO:0031623">
    <property type="term" value="P:receptor internalization"/>
    <property type="evidence" value="ECO:0000318"/>
    <property type="project" value="GO_Central"/>
</dbReference>
<dbReference type="GO" id="GO:0016185">
    <property type="term" value="P:synaptic vesicle budding from presynaptic endocytic zone membrane"/>
    <property type="evidence" value="ECO:0000318"/>
    <property type="project" value="GO_Central"/>
</dbReference>
<dbReference type="CDD" id="cd08771">
    <property type="entry name" value="DLP_1"/>
    <property type="match status" value="1"/>
</dbReference>
<dbReference type="CDD" id="cd01256">
    <property type="entry name" value="PH_dynamin"/>
    <property type="match status" value="1"/>
</dbReference>
<dbReference type="FunFam" id="1.20.120.1240:FF:000019">
    <property type="entry name" value="Dynamin 2"/>
    <property type="match status" value="1"/>
</dbReference>
<dbReference type="FunFam" id="1.20.120.1240:FF:000014">
    <property type="entry name" value="Dynamin 2b"/>
    <property type="match status" value="1"/>
</dbReference>
<dbReference type="FunFam" id="3.40.50.300:FF:000045">
    <property type="entry name" value="dynamin-1 isoform X2"/>
    <property type="match status" value="1"/>
</dbReference>
<dbReference type="FunFam" id="2.30.29.30:FF:000555">
    <property type="entry name" value="dynamin-1-like isoform X1"/>
    <property type="match status" value="1"/>
</dbReference>
<dbReference type="Gene3D" id="1.20.120.1240">
    <property type="entry name" value="Dynamin, middle domain"/>
    <property type="match status" value="1"/>
</dbReference>
<dbReference type="Gene3D" id="3.40.50.300">
    <property type="entry name" value="P-loop containing nucleotide triphosphate hydrolases"/>
    <property type="match status" value="1"/>
</dbReference>
<dbReference type="Gene3D" id="2.30.29.30">
    <property type="entry name" value="Pleckstrin-homology domain (PH domain)/Phosphotyrosine-binding domain (PTB)"/>
    <property type="match status" value="1"/>
</dbReference>
<dbReference type="InterPro" id="IPR022812">
    <property type="entry name" value="Dynamin"/>
</dbReference>
<dbReference type="InterPro" id="IPR001401">
    <property type="entry name" value="Dynamin_GTPase"/>
</dbReference>
<dbReference type="InterPro" id="IPR019762">
    <property type="entry name" value="Dynamin_GTPase_CS"/>
</dbReference>
<dbReference type="InterPro" id="IPR045063">
    <property type="entry name" value="Dynamin_N"/>
</dbReference>
<dbReference type="InterPro" id="IPR000375">
    <property type="entry name" value="Dynamin_stalk"/>
</dbReference>
<dbReference type="InterPro" id="IPR030381">
    <property type="entry name" value="G_DYNAMIN_dom"/>
</dbReference>
<dbReference type="InterPro" id="IPR003130">
    <property type="entry name" value="GED"/>
</dbReference>
<dbReference type="InterPro" id="IPR020850">
    <property type="entry name" value="GED_dom"/>
</dbReference>
<dbReference type="InterPro" id="IPR027417">
    <property type="entry name" value="P-loop_NTPase"/>
</dbReference>
<dbReference type="InterPro" id="IPR011993">
    <property type="entry name" value="PH-like_dom_sf"/>
</dbReference>
<dbReference type="InterPro" id="IPR001849">
    <property type="entry name" value="PH_domain"/>
</dbReference>
<dbReference type="PANTHER" id="PTHR11566">
    <property type="entry name" value="DYNAMIN"/>
    <property type="match status" value="1"/>
</dbReference>
<dbReference type="PANTHER" id="PTHR11566:SF32">
    <property type="entry name" value="DYNAMIN-1"/>
    <property type="match status" value="1"/>
</dbReference>
<dbReference type="Pfam" id="PF01031">
    <property type="entry name" value="Dynamin_M"/>
    <property type="match status" value="1"/>
</dbReference>
<dbReference type="Pfam" id="PF00350">
    <property type="entry name" value="Dynamin_N"/>
    <property type="match status" value="1"/>
</dbReference>
<dbReference type="Pfam" id="PF02212">
    <property type="entry name" value="GED"/>
    <property type="match status" value="1"/>
</dbReference>
<dbReference type="Pfam" id="PF00169">
    <property type="entry name" value="PH"/>
    <property type="match status" value="1"/>
</dbReference>
<dbReference type="PRINTS" id="PR00195">
    <property type="entry name" value="DYNAMIN"/>
</dbReference>
<dbReference type="SMART" id="SM00053">
    <property type="entry name" value="DYNc"/>
    <property type="match status" value="1"/>
</dbReference>
<dbReference type="SMART" id="SM00302">
    <property type="entry name" value="GED"/>
    <property type="match status" value="1"/>
</dbReference>
<dbReference type="SMART" id="SM00233">
    <property type="entry name" value="PH"/>
    <property type="match status" value="1"/>
</dbReference>
<dbReference type="SUPFAM" id="SSF52540">
    <property type="entry name" value="P-loop containing nucleoside triphosphate hydrolases"/>
    <property type="match status" value="1"/>
</dbReference>
<dbReference type="SUPFAM" id="SSF50729">
    <property type="entry name" value="PH domain-like"/>
    <property type="match status" value="1"/>
</dbReference>
<dbReference type="PROSITE" id="PS00410">
    <property type="entry name" value="G_DYNAMIN_1"/>
    <property type="match status" value="1"/>
</dbReference>
<dbReference type="PROSITE" id="PS51718">
    <property type="entry name" value="G_DYNAMIN_2"/>
    <property type="match status" value="1"/>
</dbReference>
<dbReference type="PROSITE" id="PS51388">
    <property type="entry name" value="GED"/>
    <property type="match status" value="1"/>
</dbReference>
<dbReference type="PROSITE" id="PS50003">
    <property type="entry name" value="PH_DOMAIN"/>
    <property type="match status" value="1"/>
</dbReference>
<proteinExistence type="evidence at protein level"/>
<comment type="function">
    <text evidence="2 3 8 9">Catalyzes the hydrolysis of GTP and utilizes this energy to mediate vesicle scission and participates in many forms of endocytosis, such as clathrin-mediated endocytosis or synaptic vesicle endocytosis as well as rapid endocytosis (RE). Associates to the membrane, through lipid binding, and self-assembles into rings and stacks of interconnected rings through oligomerization to form a helical polymer around the vesicle membrane leading to constriction of invaginated coated pits around their necks. Self-assembly of the helical polymer induces membrane tubules narrowing until the polymer reaches a length sufficient to trigger GTP hydrolysis. Depending on the curvature imposed on the tubules, membrane detachment from the helical polymer upon GTP hydrolysis can cause spontaneous hemifission followed by complete fission. May play a role in regulating early stages of clathrin-mediated endocytosis in non-neuronal cells through its activation by dephosphorylation via the signaling downstream of EGFR (By similarity). Controls vesicle size at a step before fission, during formation of membrane pits, at hippocampal synapses. Controls plastic adaptation of the synaptic vesicle recycling machinery to high levels of activity (By similarity). Mediates rapid endocytosis (RE), a Ca(2+)-dependent and clathrin- and K(+)-independent process in chromaffin cells (PubMed:11959911). Microtubule-associated force-producing protein involved in producing microtubule bundles and able to bind and hydrolyze GTP (PubMed:1311055). Through its interaction with DNAJC6, acts during the early steps of clathrin-coated vesicle (CCV) formation (By similarity).</text>
</comment>
<comment type="catalytic activity">
    <reaction evidence="9">
        <text>GTP + H2O = GDP + phosphate + H(+)</text>
        <dbReference type="Rhea" id="RHEA:19669"/>
        <dbReference type="ChEBI" id="CHEBI:15377"/>
        <dbReference type="ChEBI" id="CHEBI:15378"/>
        <dbReference type="ChEBI" id="CHEBI:37565"/>
        <dbReference type="ChEBI" id="CHEBI:43474"/>
        <dbReference type="ChEBI" id="CHEBI:58189"/>
        <dbReference type="EC" id="3.6.5.5"/>
    </reaction>
    <physiologicalReaction direction="left-to-right" evidence="9">
        <dbReference type="Rhea" id="RHEA:19670"/>
    </physiologicalReaction>
</comment>
<comment type="biophysicochemical properties">
    <kinetics>
        <KM evidence="9">12 uM for GTP</KM>
    </kinetics>
</comment>
<comment type="subunit">
    <text evidence="1 2 3">Homodimer; homodimerization is mediated by the dynamin-type G domain which promotes assembly-stimulated GTPase activity. Homo-tetramer formed from two dimers in the absence of lipid. Oligomerizes into a helical polymer that self-assembles around the vesicle membrane, when associated to the menbrane through lipid binding. Interacts (via C-terminal proline-rich domain (PRD)) with SNX9 (via SH3 domain); this interaction allows regulation of DNM1 self-assembly during late stages of endocytic vesicle formation and supports DNM1's early functions in accelerating clathrin-coated pits (CCPs) maturation in non neuronals cell. Interacts (via C-terminal proline-rich domain (PRD)) with MYO1E (via SH3 domain); this interaction regulates receptor-mediated endocytosis. Interacts with SNX33 (via SH3 domain); this interaction decreases DNM1-dependent endocytosis. Interacts with DIAPH1. Interacts with GRB2 (via SH3 domain); this interaction mediates disassembly of DNM1 polymers, therefore modulates self-assembly (By similarity). Forms a complex with BIN1 (via SH3 domain) and SH3GL2 (via SH3 domain). Forms a complex with SH3GL2 (via SH3 domain) and AMPH (via SH3 domain). Forms a complex with SH3GL2 (via SH3 domain) and SYNJ1. Interacts with AMPH. Interacts (via C-terminal proline-rich domain (PRD)) with SYT1; this interaction facilitates vesicle fission during clathrin-mediated endocytosis (CME). Interacts (via C-terminal proline-rich domain (PRD)) with PLCG1 (via SH3 domain); this interaction stimulates the release of GDP from DNM1 and enhances DNM1-dependent endocytosis. Interacts with SNPH; this interaction inhibits the binding of DNM1 to AMPH and DNM1-receptor-mediated endocytosis (By similarity). Interacts with CAV1. Interacts with SH3GLB1 (via SH3 domain). Interacts with PACSIN1 (via SH3 domain), PACSIN2 (via SH3 domain) and PACSIN3 (via SH3 domain). Interacts with UNC119; this interaction decreases DNM1's GTPase activity and affects DNM1's interaction with AMPH. Interacts with AMPH (By similarity). Interacts (GTP-bound form) with DNAJC6; this interaction allows clathrin-coated vesicle (CCV) formation at the plasma membrane (By similarity).</text>
</comment>
<comment type="subcellular location">
    <subcellularLocation>
        <location evidence="3">Cell membrane</location>
    </subcellularLocation>
    <subcellularLocation>
        <location evidence="3">Membrane</location>
        <location evidence="3">Clathrin-coated pit</location>
    </subcellularLocation>
    <subcellularLocation>
        <location evidence="1 2">Cytoplasmic vesicle</location>
    </subcellularLocation>
    <subcellularLocation>
        <location evidence="1">Presynapse</location>
    </subcellularLocation>
    <subcellularLocation>
        <location evidence="8">Cytoplasmic vesicle</location>
        <location evidence="8">Secretory vesicle</location>
        <location evidence="8">Chromaffin granule</location>
    </subcellularLocation>
    <text evidence="3">Associated to the membrane in a helical polymer shape in a GTP bound state. Transiently recruited to endocytic clathrin-coated pits (CCPs) at a late stage of clathrin-coated vesicle (CCV) formation.</text>
</comment>
<comment type="domain">
    <text evidence="3">The dynamin-type G mediates homodimerization and plays a role in self-assembly.</text>
</comment>
<comment type="domain">
    <text evidence="1 3">The C-terminal proline-rich domain (PRD) mediates interaction with SH3-binding partners (By similarity). Is required for DNM1 self-assembly (By similarity).</text>
</comment>
<comment type="domain">
    <text evidence="3">The PH domain binds phosphoinositides such as 1-phosphatidyl-1D-myo-inositol 4,5-bisphosphate, 1-phosphatidyl-1D-myo-inositol 3,4-bisphosphate and 1-phosphatidyl-1D-myo-inositol 3,4,5-trisphosphate, and mediates receptor-mediated endocytosis.</text>
</comment>
<comment type="PTM">
    <text evidence="3">Phosphorylation at Ser-774 by GSK3B/GSK3-beta leads to inactivation of receptor-mediated endocytosis in non-neuronal cells. Dephosphorylation at Ser-774, through the EGFR downstream signaling, leads to activation and regulates early stages of clathrin-mediated endocytosis (CME).</text>
</comment>
<comment type="similarity">
    <text evidence="6">Belongs to the TRAFAC class dynamin-like GTPase superfamily. Dynamin/Fzo/YdjA family.</text>
</comment>
<reference key="1">
    <citation type="submission" date="2006-09" db="EMBL/GenBank/DDBJ databases">
        <authorList>
            <consortium name="NIH - Mammalian Gene Collection (MGC) project"/>
        </authorList>
    </citation>
    <scope>NUCLEOTIDE SEQUENCE [LARGE SCALE MRNA]</scope>
    <source>
        <strain>Hereford</strain>
        <tissue>Hippocampus</tissue>
    </source>
</reference>
<reference key="2">
    <citation type="journal article" date="1992" name="Nature">
        <title>Dynamin is a GTPase stimulated to high levels of activity by microtubules.</title>
        <authorList>
            <person name="Shpetner H.S."/>
            <person name="Vallee R.B."/>
        </authorList>
    </citation>
    <scope>FUNCTION</scope>
    <scope>CATALYTIC ACTIVITY</scope>
    <scope>BIOPHYSICOCHEMICAL PROPERTIES</scope>
</reference>
<reference key="3">
    <citation type="journal article" date="2002" name="Proc. Natl. Acad. Sci. U.S.A.">
        <title>Sustained stimulation shifts the mechanism of endocytosis from dynamin-1-dependent rapid endocytosis to clathrin- and dynamin-2-mediated slow endocytosis in chromaffin cells.</title>
        <authorList>
            <person name="Artalejo C.R."/>
            <person name="Elhamdani A."/>
            <person name="Palfrey H.C."/>
        </authorList>
    </citation>
    <scope>FUNCTION</scope>
    <scope>SUBCELLULAR LOCATION</scope>
</reference>
<sequence>MGNRGMEDLIPLVNRLQDAFSAIGQNADLDLPQIAVVGGQSAGKSSVLENFVGRDFLPRGSGIVTRRPLVLQLVNATTEYAEFLHCKGKKFTDFEEVRLEIEAETDRVTGTNKGISPVPINLRVYSPHVLNLTLVDLPGMTKVPVGDQPPDIEFQIRDMLMQFVTKENCLILAVSPANSDLANSDALKVAKEVDPQGQRTIGVITKLDLMDEGTDARDVLENKLLPLRRGYIGVVNRSQKDIDGKKDITAALAAERKFFLSHPSYRHLADRMGTPYLQKVLNQQLTNHIRDTLPGLRNKLQSQLLSIEKEVEEYKNFRPDDPARKTKALLQMVQQFAVDFEKRIEGSGDQIDTYELSGGARINRIFHERFPFELVKMEFDEKELRREISYAIKNIHGIRTGLFTPDLAFEATVKKQVQKLKEPSIKCVDMVVSELTATIRKCSEKLQQYPRLREEMERIVTTHIREREGRTKEQVMLLIDIELAYMNTNHEDFIGFANAQQRSNQMNKKKASGNQDEILVIRKGWLTINNIGIMKGGSKEYWFVLTAENLSWYKDDEEKEKKYMLSVDNLKLRDVEKGFMSSKHIFALFNTEQRNVYKDYRQLELACETQEEVDSWKASFLRAGVYPERVGDKEKASETEENGSDSFMHSMDPQLERQVETIRNLVDSYMAIVNKTVRDLMPKTIMHLMINNTKEFIFSELLANLYSCGDQNTLMEESAEQAQRRDEMLRMYHALKEALSIIGDINTTTVSTPMPPPVDDSWLQVQSVPTGRRSPTSSPTPQRRAPAVPPARPGSRGPAPGPPPAGSALGGAPPVPSRPGASPDPFGPPPQVPSRPNRAPPGVPSQPIGSGKSIPS</sequence>
<evidence type="ECO:0000250" key="1">
    <source>
        <dbReference type="UniProtKB" id="P21575"/>
    </source>
</evidence>
<evidence type="ECO:0000250" key="2">
    <source>
        <dbReference type="UniProtKB" id="P39053"/>
    </source>
</evidence>
<evidence type="ECO:0000250" key="3">
    <source>
        <dbReference type="UniProtKB" id="Q05193"/>
    </source>
</evidence>
<evidence type="ECO:0000255" key="4">
    <source>
        <dbReference type="PROSITE-ProRule" id="PRU00145"/>
    </source>
</evidence>
<evidence type="ECO:0000255" key="5">
    <source>
        <dbReference type="PROSITE-ProRule" id="PRU00720"/>
    </source>
</evidence>
<evidence type="ECO:0000255" key="6">
    <source>
        <dbReference type="PROSITE-ProRule" id="PRU01055"/>
    </source>
</evidence>
<evidence type="ECO:0000256" key="7">
    <source>
        <dbReference type="SAM" id="MobiDB-lite"/>
    </source>
</evidence>
<evidence type="ECO:0000269" key="8">
    <source>
    </source>
</evidence>
<evidence type="ECO:0000269" key="9">
    <source>
    </source>
</evidence>
<evidence type="ECO:0000303" key="10">
    <source>
    </source>
</evidence>
<keyword id="KW-1003">Cell membrane</keyword>
<keyword id="KW-0966">Cell projection</keyword>
<keyword id="KW-0168">Coated pit</keyword>
<keyword id="KW-0968">Cytoplasmic vesicle</keyword>
<keyword id="KW-0254">Endocytosis</keyword>
<keyword id="KW-0342">GTP-binding</keyword>
<keyword id="KW-0378">Hydrolase</keyword>
<keyword id="KW-0472">Membrane</keyword>
<keyword id="KW-0488">Methylation</keyword>
<keyword id="KW-0493">Microtubule</keyword>
<keyword id="KW-0505">Motor protein</keyword>
<keyword id="KW-0944">Nitration</keyword>
<keyword id="KW-0547">Nucleotide-binding</keyword>
<keyword id="KW-0597">Phosphoprotein</keyword>
<keyword id="KW-1185">Reference proteome</keyword>
<keyword id="KW-0770">Synapse</keyword>
<feature type="chain" id="PRO_0000319949" description="Dynamin-1">
    <location>
        <begin position="1"/>
        <end position="856"/>
    </location>
</feature>
<feature type="domain" description="Dynamin-type G" evidence="6">
    <location>
        <begin position="28"/>
        <end position="294"/>
    </location>
</feature>
<feature type="domain" description="PH" evidence="4">
    <location>
        <begin position="519"/>
        <end position="625"/>
    </location>
</feature>
<feature type="domain" description="GED" evidence="5">
    <location>
        <begin position="659"/>
        <end position="750"/>
    </location>
</feature>
<feature type="region of interest" description="G1 motif" evidence="6">
    <location>
        <begin position="38"/>
        <end position="45"/>
    </location>
</feature>
<feature type="region of interest" description="G2 motif" evidence="6">
    <location>
        <begin position="64"/>
        <end position="66"/>
    </location>
</feature>
<feature type="region of interest" description="G3 motif" evidence="6">
    <location>
        <begin position="136"/>
        <end position="139"/>
    </location>
</feature>
<feature type="region of interest" description="G4 motif" evidence="6">
    <location>
        <begin position="205"/>
        <end position="208"/>
    </location>
</feature>
<feature type="region of interest" description="G5 motif" evidence="6">
    <location>
        <begin position="235"/>
        <end position="238"/>
    </location>
</feature>
<feature type="region of interest" description="Disordered" evidence="7">
    <location>
        <begin position="750"/>
        <end position="856"/>
    </location>
</feature>
<feature type="compositionally biased region" description="Polar residues" evidence="7">
    <location>
        <begin position="763"/>
        <end position="781"/>
    </location>
</feature>
<feature type="compositionally biased region" description="Pro residues" evidence="7">
    <location>
        <begin position="825"/>
        <end position="844"/>
    </location>
</feature>
<feature type="binding site" evidence="3">
    <location>
        <position position="41"/>
    </location>
    <ligand>
        <name>GDP</name>
        <dbReference type="ChEBI" id="CHEBI:58189"/>
    </ligand>
</feature>
<feature type="binding site" evidence="3">
    <location>
        <position position="43"/>
    </location>
    <ligand>
        <name>GDP</name>
        <dbReference type="ChEBI" id="CHEBI:58189"/>
    </ligand>
</feature>
<feature type="binding site" evidence="3">
    <location>
        <position position="44"/>
    </location>
    <ligand>
        <name>GDP</name>
        <dbReference type="ChEBI" id="CHEBI:58189"/>
    </ligand>
</feature>
<feature type="binding site" evidence="3">
    <location>
        <position position="45"/>
    </location>
    <ligand>
        <name>GDP</name>
        <dbReference type="ChEBI" id="CHEBI:58189"/>
    </ligand>
</feature>
<feature type="binding site" evidence="3">
    <location>
        <position position="46"/>
    </location>
    <ligand>
        <name>GDP</name>
        <dbReference type="ChEBI" id="CHEBI:58189"/>
    </ligand>
</feature>
<feature type="binding site" evidence="3">
    <location>
        <position position="59"/>
    </location>
    <ligand>
        <name>GDP</name>
        <dbReference type="ChEBI" id="CHEBI:58189"/>
    </ligand>
</feature>
<feature type="binding site" evidence="3">
    <location>
        <position position="60"/>
    </location>
    <ligand>
        <name>GDP</name>
        <dbReference type="ChEBI" id="CHEBI:58189"/>
    </ligand>
</feature>
<feature type="binding site" evidence="3">
    <location>
        <position position="206"/>
    </location>
    <ligand>
        <name>GDP</name>
        <dbReference type="ChEBI" id="CHEBI:58189"/>
    </ligand>
</feature>
<feature type="binding site" evidence="3">
    <location>
        <position position="208"/>
    </location>
    <ligand>
        <name>GDP</name>
        <dbReference type="ChEBI" id="CHEBI:58189"/>
    </ligand>
</feature>
<feature type="binding site" evidence="3">
    <location>
        <position position="211"/>
    </location>
    <ligand>
        <name>GDP</name>
        <dbReference type="ChEBI" id="CHEBI:58189"/>
    </ligand>
</feature>
<feature type="binding site" evidence="3">
    <location>
        <position position="236"/>
    </location>
    <ligand>
        <name>GDP</name>
        <dbReference type="ChEBI" id="CHEBI:58189"/>
    </ligand>
</feature>
<feature type="binding site" evidence="3">
    <location>
        <position position="237"/>
    </location>
    <ligand>
        <name>GDP</name>
        <dbReference type="ChEBI" id="CHEBI:58189"/>
    </ligand>
</feature>
<feature type="binding site" evidence="3">
    <location>
        <position position="239"/>
    </location>
    <ligand>
        <name>GDP</name>
        <dbReference type="ChEBI" id="CHEBI:58189"/>
    </ligand>
</feature>
<feature type="modified residue" description="Phosphotyrosine" evidence="2">
    <location>
        <position position="80"/>
    </location>
</feature>
<feature type="modified residue" description="3'-nitrotyrosine; alternate" evidence="2">
    <location>
        <position position="125"/>
    </location>
</feature>
<feature type="modified residue" description="Phosphotyrosine; alternate" evidence="2">
    <location>
        <position position="125"/>
    </location>
</feature>
<feature type="modified residue" description="Phosphoserine" evidence="2">
    <location>
        <position position="306"/>
    </location>
</feature>
<feature type="modified residue" description="Phosphoserine" evidence="1">
    <location>
        <position position="347"/>
    </location>
</feature>
<feature type="modified residue" description="Phosphotyrosine" evidence="2">
    <location>
        <position position="354"/>
    </location>
</feature>
<feature type="modified residue" description="Phosphoserine" evidence="2">
    <location>
        <position position="512"/>
    </location>
</feature>
<feature type="modified residue" description="Phosphoserine" evidence="1">
    <location>
        <position position="774"/>
    </location>
</feature>
<feature type="modified residue" description="Phosphoserine" evidence="1">
    <location>
        <position position="778"/>
    </location>
</feature>
<feature type="modified residue" description="Omega-N-methylarginine" evidence="2">
    <location>
        <position position="796"/>
    </location>
</feature>
<feature type="modified residue" description="Phosphoserine" evidence="1">
    <location>
        <position position="822"/>
    </location>
</feature>
<organism>
    <name type="scientific">Bos taurus</name>
    <name type="common">Bovine</name>
    <dbReference type="NCBI Taxonomy" id="9913"/>
    <lineage>
        <taxon>Eukaryota</taxon>
        <taxon>Metazoa</taxon>
        <taxon>Chordata</taxon>
        <taxon>Craniata</taxon>
        <taxon>Vertebrata</taxon>
        <taxon>Euteleostomi</taxon>
        <taxon>Mammalia</taxon>
        <taxon>Eutheria</taxon>
        <taxon>Laurasiatheria</taxon>
        <taxon>Artiodactyla</taxon>
        <taxon>Ruminantia</taxon>
        <taxon>Pecora</taxon>
        <taxon>Bovidae</taxon>
        <taxon>Bovinae</taxon>
        <taxon>Bos</taxon>
    </lineage>
</organism>
<name>DYN1_BOVIN</name>
<protein>
    <recommendedName>
        <fullName evidence="3">Dynamin-1</fullName>
        <ecNumber evidence="9">3.6.5.5</ecNumber>
    </recommendedName>
    <alternativeName>
        <fullName evidence="10">Dynamin</fullName>
    </alternativeName>
</protein>
<gene>
    <name evidence="3" type="primary">DNM1</name>
</gene>